<dbReference type="EC" id="5.6.2.4" evidence="1"/>
<dbReference type="EMBL" id="CP000742">
    <property type="protein sequence ID" value="ABR53945.1"/>
    <property type="molecule type" value="Genomic_DNA"/>
</dbReference>
<dbReference type="RefSeq" id="WP_011971849.1">
    <property type="nucleotide sequence ID" value="NC_009634.1"/>
</dbReference>
<dbReference type="SMR" id="A6UN73"/>
<dbReference type="STRING" id="406327.Mevan_0030"/>
<dbReference type="GeneID" id="5325697"/>
<dbReference type="KEGG" id="mvn:Mevan_0030"/>
<dbReference type="eggNOG" id="arCOG00553">
    <property type="taxonomic scope" value="Archaea"/>
</dbReference>
<dbReference type="HOGENOM" id="CLU_006553_3_0_2"/>
<dbReference type="OrthoDB" id="371946at2157"/>
<dbReference type="Proteomes" id="UP000001107">
    <property type="component" value="Chromosome"/>
</dbReference>
<dbReference type="GO" id="GO:0043138">
    <property type="term" value="F:3'-5' DNA helicase activity"/>
    <property type="evidence" value="ECO:0007669"/>
    <property type="project" value="UniProtKB-UniRule"/>
</dbReference>
<dbReference type="GO" id="GO:0005524">
    <property type="term" value="F:ATP binding"/>
    <property type="evidence" value="ECO:0007669"/>
    <property type="project" value="UniProtKB-UniRule"/>
</dbReference>
<dbReference type="GO" id="GO:0016887">
    <property type="term" value="F:ATP hydrolysis activity"/>
    <property type="evidence" value="ECO:0007669"/>
    <property type="project" value="RHEA"/>
</dbReference>
<dbReference type="GO" id="GO:0003677">
    <property type="term" value="F:DNA binding"/>
    <property type="evidence" value="ECO:0007669"/>
    <property type="project" value="UniProtKB-UniRule"/>
</dbReference>
<dbReference type="GO" id="GO:0006281">
    <property type="term" value="P:DNA repair"/>
    <property type="evidence" value="ECO:0007669"/>
    <property type="project" value="UniProtKB-UniRule"/>
</dbReference>
<dbReference type="CDD" id="cd18028">
    <property type="entry name" value="DEXHc_archSki2"/>
    <property type="match status" value="1"/>
</dbReference>
<dbReference type="CDD" id="cd18795">
    <property type="entry name" value="SF2_C_Ski2"/>
    <property type="match status" value="1"/>
</dbReference>
<dbReference type="Gene3D" id="1.10.3380.30">
    <property type="match status" value="1"/>
</dbReference>
<dbReference type="Gene3D" id="1.10.150.20">
    <property type="entry name" value="5' to 3' exonuclease, C-terminal subdomain"/>
    <property type="match status" value="1"/>
</dbReference>
<dbReference type="Gene3D" id="3.40.50.300">
    <property type="entry name" value="P-loop containing nucleotide triphosphate hydrolases"/>
    <property type="match status" value="2"/>
</dbReference>
<dbReference type="Gene3D" id="1.10.10.10">
    <property type="entry name" value="Winged helix-like DNA-binding domain superfamily/Winged helix DNA-binding domain"/>
    <property type="match status" value="1"/>
</dbReference>
<dbReference type="HAMAP" id="MF_00442">
    <property type="entry name" value="Helicase_Hel308"/>
    <property type="match status" value="1"/>
</dbReference>
<dbReference type="InterPro" id="IPR011545">
    <property type="entry name" value="DEAD/DEAH_box_helicase_dom"/>
</dbReference>
<dbReference type="InterPro" id="IPR048772">
    <property type="entry name" value="Hel308-like_dom4"/>
</dbReference>
<dbReference type="InterPro" id="IPR050474">
    <property type="entry name" value="Hel308_SKI2-like"/>
</dbReference>
<dbReference type="InterPro" id="IPR014001">
    <property type="entry name" value="Helicase_ATP-bd"/>
</dbReference>
<dbReference type="InterPro" id="IPR001650">
    <property type="entry name" value="Helicase_C-like"/>
</dbReference>
<dbReference type="InterPro" id="IPR022965">
    <property type="entry name" value="Helicase_Hel308"/>
</dbReference>
<dbReference type="InterPro" id="IPR046931">
    <property type="entry name" value="HTH_61"/>
</dbReference>
<dbReference type="InterPro" id="IPR027417">
    <property type="entry name" value="P-loop_NTPase"/>
</dbReference>
<dbReference type="InterPro" id="IPR036388">
    <property type="entry name" value="WH-like_DNA-bd_sf"/>
</dbReference>
<dbReference type="InterPro" id="IPR036390">
    <property type="entry name" value="WH_DNA-bd_sf"/>
</dbReference>
<dbReference type="PANTHER" id="PTHR47961:SF10">
    <property type="entry name" value="ATP-DEPENDENT DNA HELICASE HEL308"/>
    <property type="match status" value="1"/>
</dbReference>
<dbReference type="PANTHER" id="PTHR47961">
    <property type="entry name" value="DNA POLYMERASE THETA, PUTATIVE (AFU_ORTHOLOGUE AFUA_1G05260)-RELATED"/>
    <property type="match status" value="1"/>
</dbReference>
<dbReference type="Pfam" id="PF00270">
    <property type="entry name" value="DEAD"/>
    <property type="match status" value="1"/>
</dbReference>
<dbReference type="Pfam" id="PF00271">
    <property type="entry name" value="Helicase_C"/>
    <property type="match status" value="1"/>
</dbReference>
<dbReference type="Pfam" id="PF21280">
    <property type="entry name" value="Helicase_dom4_arc"/>
    <property type="match status" value="1"/>
</dbReference>
<dbReference type="Pfam" id="PF20470">
    <property type="entry name" value="HTH_61"/>
    <property type="match status" value="1"/>
</dbReference>
<dbReference type="SMART" id="SM00487">
    <property type="entry name" value="DEXDc"/>
    <property type="match status" value="1"/>
</dbReference>
<dbReference type="SMART" id="SM00490">
    <property type="entry name" value="HELICc"/>
    <property type="match status" value="1"/>
</dbReference>
<dbReference type="SUPFAM" id="SSF52540">
    <property type="entry name" value="P-loop containing nucleoside triphosphate hydrolases"/>
    <property type="match status" value="1"/>
</dbReference>
<dbReference type="SUPFAM" id="SSF158702">
    <property type="entry name" value="Sec63 N-terminal domain-like"/>
    <property type="match status" value="1"/>
</dbReference>
<dbReference type="SUPFAM" id="SSF46785">
    <property type="entry name" value="Winged helix' DNA-binding domain"/>
    <property type="match status" value="1"/>
</dbReference>
<dbReference type="PROSITE" id="PS51192">
    <property type="entry name" value="HELICASE_ATP_BIND_1"/>
    <property type="match status" value="1"/>
</dbReference>
<dbReference type="PROSITE" id="PS51194">
    <property type="entry name" value="HELICASE_CTER"/>
    <property type="match status" value="1"/>
</dbReference>
<feature type="chain" id="PRO_1000124584" description="ATP-dependent DNA helicase Hel308">
    <location>
        <begin position="1"/>
        <end position="751"/>
    </location>
</feature>
<feature type="domain" description="Helicase ATP-binding" evidence="1">
    <location>
        <begin position="26"/>
        <end position="196"/>
    </location>
</feature>
<feature type="domain" description="Helicase C-terminal" evidence="1">
    <location>
        <begin position="235"/>
        <end position="435"/>
    </location>
</feature>
<feature type="short sequence motif" description="DEAH box" evidence="1">
    <location>
        <begin position="143"/>
        <end position="146"/>
    </location>
</feature>
<feature type="binding site" evidence="1">
    <location>
        <position position="20"/>
    </location>
    <ligand>
        <name>ATP</name>
        <dbReference type="ChEBI" id="CHEBI:30616"/>
    </ligand>
</feature>
<feature type="binding site" evidence="1">
    <location>
        <begin position="39"/>
        <end position="46"/>
    </location>
    <ligand>
        <name>ATP</name>
        <dbReference type="ChEBI" id="CHEBI:30616"/>
    </ligand>
</feature>
<gene>
    <name evidence="1" type="primary">hel308</name>
    <name type="ordered locus">Mevan_0030</name>
</gene>
<evidence type="ECO:0000255" key="1">
    <source>
        <dbReference type="HAMAP-Rule" id="MF_00442"/>
    </source>
</evidence>
<comment type="function">
    <text evidence="1">DNA-dependent ATPase and 3'-5' DNA helicase that may be involved in repair of stalled replication forks.</text>
</comment>
<comment type="catalytic activity">
    <reaction evidence="1">
        <text>Couples ATP hydrolysis with the unwinding of duplex DNA by translocating in the 3'-5' direction.</text>
        <dbReference type="EC" id="5.6.2.4"/>
    </reaction>
</comment>
<comment type="catalytic activity">
    <reaction evidence="1">
        <text>ATP + H2O = ADP + phosphate + H(+)</text>
        <dbReference type="Rhea" id="RHEA:13065"/>
        <dbReference type="ChEBI" id="CHEBI:15377"/>
        <dbReference type="ChEBI" id="CHEBI:15378"/>
        <dbReference type="ChEBI" id="CHEBI:30616"/>
        <dbReference type="ChEBI" id="CHEBI:43474"/>
        <dbReference type="ChEBI" id="CHEBI:456216"/>
        <dbReference type="EC" id="5.6.2.4"/>
    </reaction>
</comment>
<comment type="subunit">
    <text evidence="1">Monomer.</text>
</comment>
<comment type="similarity">
    <text evidence="1">Belongs to the helicase family. Hel308 subfamily.</text>
</comment>
<keyword id="KW-0067">ATP-binding</keyword>
<keyword id="KW-0227">DNA damage</keyword>
<keyword id="KW-0234">DNA repair</keyword>
<keyword id="KW-0238">DNA-binding</keyword>
<keyword id="KW-0347">Helicase</keyword>
<keyword id="KW-0378">Hydrolase</keyword>
<keyword id="KW-0413">Isomerase</keyword>
<keyword id="KW-0547">Nucleotide-binding</keyword>
<protein>
    <recommendedName>
        <fullName evidence="1">ATP-dependent DNA helicase Hel308</fullName>
        <ecNumber evidence="1">5.6.2.4</ecNumber>
    </recommendedName>
    <alternativeName>
        <fullName evidence="1">DNA 3'-5' helicase Hel308</fullName>
    </alternativeName>
</protein>
<accession>A6UN73</accession>
<name>HELS_METVS</name>
<proteinExistence type="inferred from homology"/>
<organism>
    <name type="scientific">Methanococcus vannielii (strain ATCC 35089 / DSM 1224 / JCM 13029 / OCM 148 / SB)</name>
    <dbReference type="NCBI Taxonomy" id="406327"/>
    <lineage>
        <taxon>Archaea</taxon>
        <taxon>Methanobacteriati</taxon>
        <taxon>Methanobacteriota</taxon>
        <taxon>Methanomada group</taxon>
        <taxon>Methanococci</taxon>
        <taxon>Methanococcales</taxon>
        <taxon>Methanococcaceae</taxon>
        <taxon>Methanococcus</taxon>
    </lineage>
</organism>
<reference key="1">
    <citation type="submission" date="2007-06" db="EMBL/GenBank/DDBJ databases">
        <title>Complete sequence of Methanococcus vannielii SB.</title>
        <authorList>
            <consortium name="US DOE Joint Genome Institute"/>
            <person name="Copeland A."/>
            <person name="Lucas S."/>
            <person name="Lapidus A."/>
            <person name="Barry K."/>
            <person name="Glavina del Rio T."/>
            <person name="Dalin E."/>
            <person name="Tice H."/>
            <person name="Pitluck S."/>
            <person name="Chain P."/>
            <person name="Malfatti S."/>
            <person name="Shin M."/>
            <person name="Vergez L."/>
            <person name="Schmutz J."/>
            <person name="Larimer F."/>
            <person name="Land M."/>
            <person name="Hauser L."/>
            <person name="Kyrpides N."/>
            <person name="Anderson I."/>
            <person name="Sieprawska-Lupa M."/>
            <person name="Whitman W.B."/>
            <person name="Richardson P."/>
        </authorList>
    </citation>
    <scope>NUCLEOTIDE SEQUENCE [LARGE SCALE GENOMIC DNA]</scope>
    <source>
        <strain>ATCC 35089 / DSM 1224 / JCM 13029 / OCM 148 / SB</strain>
    </source>
</reference>
<sequence>MTNVLNLLNEIGIEELRPPQKKVIEEGLLDKSKNFLICIPTASGKTLIGEMALLNHVLDENYNLTGKKGLFIVPLKALASEKFDEFQKKYETYGIKVGMSIGDYDTKEDLSKYNIIITTSEKLDSLMRHNIEWIKDLSLAVIDEIHLIGDNERGGTLEVILTKLKNINAQIVGLSATVGNPEEIANWLNAKLVTDEWRPVELKKGIYLENEINYINNQDSQKKSFKAVKSISRNNLTDLIVDSVNEKGSCLIFCNSKRNAVGESKKHNLTKYLSKAELNDLNSISEEILSILETPTETCKSLSECIKKGVAFHHAGLTYQHRKAVEEGFRNKVIKVICCTPTLSAGLNLPCRRAIIRDIRRYSQNGLIDIPKLEIHQCIGRAGRPGLDPYGEGIILAKNEKDVEKAFLALTGPLENIYSKLSNQKVLRVHILGLIATLEIKSTSELINFIKNTFYAHQYGNLHGVLTNVSKVVEFLEKNKFIETLDDDFTPKKNRVLELTLDNSNNLVLDSKRRMDTLTNLSFKPTNLGKRVSELYIDPLSSEIIIEGLNELKEKINDMDRSNIDQYIFYIISKATEMRPLLRVKMDEELELIQEMDKLKISDYSIENIEAFKNSKMFLDWINETPEEVILEKYGIEPGILRYKVDQARWMTYSSKEIAKLVKLNNDKIYKALLEMEFRIEYGAKEELIELLKIKNIGRVRARRLFNIGIKSKMDILKNPEKIISTFGDKVGKKILDEFGLKYGQQKLSGF</sequence>